<evidence type="ECO:0000255" key="1">
    <source>
        <dbReference type="HAMAP-Rule" id="MF_00823"/>
    </source>
</evidence>
<evidence type="ECO:0000255" key="2">
    <source>
        <dbReference type="PROSITE-ProRule" id="PRU01137"/>
    </source>
</evidence>
<organism>
    <name type="scientific">Geobacillus thermodenitrificans (strain NG80-2)</name>
    <dbReference type="NCBI Taxonomy" id="420246"/>
    <lineage>
        <taxon>Bacteria</taxon>
        <taxon>Bacillati</taxon>
        <taxon>Bacillota</taxon>
        <taxon>Bacilli</taxon>
        <taxon>Bacillales</taxon>
        <taxon>Anoxybacillaceae</taxon>
        <taxon>Geobacillus</taxon>
    </lineage>
</organism>
<keyword id="KW-0067">ATP-binding</keyword>
<keyword id="KW-0963">Cytoplasm</keyword>
<keyword id="KW-0275">Fatty acid biosynthesis</keyword>
<keyword id="KW-0276">Fatty acid metabolism</keyword>
<keyword id="KW-0444">Lipid biosynthesis</keyword>
<keyword id="KW-0443">Lipid metabolism</keyword>
<keyword id="KW-0547">Nucleotide-binding</keyword>
<keyword id="KW-0808">Transferase</keyword>
<gene>
    <name evidence="1" type="primary">accA</name>
    <name type="ordered locus">GTNG_2665</name>
</gene>
<comment type="function">
    <text evidence="1">Component of the acetyl coenzyme A carboxylase (ACC) complex. First, biotin carboxylase catalyzes the carboxylation of biotin on its carrier protein (BCCP) and then the CO(2) group is transferred by the carboxyltransferase to acetyl-CoA to form malonyl-CoA.</text>
</comment>
<comment type="catalytic activity">
    <reaction evidence="1">
        <text>N(6)-carboxybiotinyl-L-lysyl-[protein] + acetyl-CoA = N(6)-biotinyl-L-lysyl-[protein] + malonyl-CoA</text>
        <dbReference type="Rhea" id="RHEA:54728"/>
        <dbReference type="Rhea" id="RHEA-COMP:10505"/>
        <dbReference type="Rhea" id="RHEA-COMP:10506"/>
        <dbReference type="ChEBI" id="CHEBI:57288"/>
        <dbReference type="ChEBI" id="CHEBI:57384"/>
        <dbReference type="ChEBI" id="CHEBI:83144"/>
        <dbReference type="ChEBI" id="CHEBI:83145"/>
        <dbReference type="EC" id="2.1.3.15"/>
    </reaction>
</comment>
<comment type="pathway">
    <text evidence="1">Lipid metabolism; malonyl-CoA biosynthesis; malonyl-CoA from acetyl-CoA: step 1/1.</text>
</comment>
<comment type="subunit">
    <text evidence="1">Acetyl-CoA carboxylase is a heterohexamer composed of biotin carboxyl carrier protein (AccB), biotin carboxylase (AccC) and two subunits each of ACCase subunit alpha (AccA) and ACCase subunit beta (AccD).</text>
</comment>
<comment type="subcellular location">
    <subcellularLocation>
        <location evidence="1">Cytoplasm</location>
    </subcellularLocation>
</comment>
<comment type="similarity">
    <text evidence="1">Belongs to the AccA family.</text>
</comment>
<accession>A4IRQ6</accession>
<name>ACCA_GEOTN</name>
<dbReference type="EC" id="2.1.3.15" evidence="1"/>
<dbReference type="EMBL" id="CP000557">
    <property type="protein sequence ID" value="ABO68010.1"/>
    <property type="molecule type" value="Genomic_DNA"/>
</dbReference>
<dbReference type="RefSeq" id="WP_008880862.1">
    <property type="nucleotide sequence ID" value="NC_009328.1"/>
</dbReference>
<dbReference type="SMR" id="A4IRQ6"/>
<dbReference type="GeneID" id="87623191"/>
<dbReference type="KEGG" id="gtn:GTNG_2665"/>
<dbReference type="eggNOG" id="COG0825">
    <property type="taxonomic scope" value="Bacteria"/>
</dbReference>
<dbReference type="HOGENOM" id="CLU_015486_0_2_9"/>
<dbReference type="UniPathway" id="UPA00655">
    <property type="reaction ID" value="UER00711"/>
</dbReference>
<dbReference type="Proteomes" id="UP000001578">
    <property type="component" value="Chromosome"/>
</dbReference>
<dbReference type="GO" id="GO:0009317">
    <property type="term" value="C:acetyl-CoA carboxylase complex"/>
    <property type="evidence" value="ECO:0007669"/>
    <property type="project" value="InterPro"/>
</dbReference>
<dbReference type="GO" id="GO:0003989">
    <property type="term" value="F:acetyl-CoA carboxylase activity"/>
    <property type="evidence" value="ECO:0007669"/>
    <property type="project" value="InterPro"/>
</dbReference>
<dbReference type="GO" id="GO:0005524">
    <property type="term" value="F:ATP binding"/>
    <property type="evidence" value="ECO:0007669"/>
    <property type="project" value="UniProtKB-KW"/>
</dbReference>
<dbReference type="GO" id="GO:0016743">
    <property type="term" value="F:carboxyl- or carbamoyltransferase activity"/>
    <property type="evidence" value="ECO:0007669"/>
    <property type="project" value="UniProtKB-UniRule"/>
</dbReference>
<dbReference type="GO" id="GO:0006633">
    <property type="term" value="P:fatty acid biosynthetic process"/>
    <property type="evidence" value="ECO:0007669"/>
    <property type="project" value="UniProtKB-KW"/>
</dbReference>
<dbReference type="GO" id="GO:2001295">
    <property type="term" value="P:malonyl-CoA biosynthetic process"/>
    <property type="evidence" value="ECO:0007669"/>
    <property type="project" value="UniProtKB-UniRule"/>
</dbReference>
<dbReference type="Gene3D" id="3.90.226.10">
    <property type="entry name" value="2-enoyl-CoA Hydratase, Chain A, domain 1"/>
    <property type="match status" value="1"/>
</dbReference>
<dbReference type="HAMAP" id="MF_00823">
    <property type="entry name" value="AcetylCoA_CT_alpha"/>
    <property type="match status" value="1"/>
</dbReference>
<dbReference type="InterPro" id="IPR001095">
    <property type="entry name" value="Acetyl_CoA_COase_a_su"/>
</dbReference>
<dbReference type="InterPro" id="IPR029045">
    <property type="entry name" value="ClpP/crotonase-like_dom_sf"/>
</dbReference>
<dbReference type="InterPro" id="IPR011763">
    <property type="entry name" value="COA_CT_C"/>
</dbReference>
<dbReference type="NCBIfam" id="TIGR00513">
    <property type="entry name" value="accA"/>
    <property type="match status" value="1"/>
</dbReference>
<dbReference type="NCBIfam" id="NF041504">
    <property type="entry name" value="AccA_sub"/>
    <property type="match status" value="1"/>
</dbReference>
<dbReference type="NCBIfam" id="NF004344">
    <property type="entry name" value="PRK05724.1"/>
    <property type="match status" value="1"/>
</dbReference>
<dbReference type="PANTHER" id="PTHR42853">
    <property type="entry name" value="ACETYL-COENZYME A CARBOXYLASE CARBOXYL TRANSFERASE SUBUNIT ALPHA"/>
    <property type="match status" value="1"/>
</dbReference>
<dbReference type="PANTHER" id="PTHR42853:SF3">
    <property type="entry name" value="ACETYL-COENZYME A CARBOXYLASE CARBOXYL TRANSFERASE SUBUNIT ALPHA, CHLOROPLASTIC"/>
    <property type="match status" value="1"/>
</dbReference>
<dbReference type="Pfam" id="PF03255">
    <property type="entry name" value="ACCA"/>
    <property type="match status" value="1"/>
</dbReference>
<dbReference type="PRINTS" id="PR01069">
    <property type="entry name" value="ACCCTRFRASEA"/>
</dbReference>
<dbReference type="SUPFAM" id="SSF52096">
    <property type="entry name" value="ClpP/crotonase"/>
    <property type="match status" value="1"/>
</dbReference>
<dbReference type="PROSITE" id="PS50989">
    <property type="entry name" value="COA_CT_CTER"/>
    <property type="match status" value="1"/>
</dbReference>
<reference key="1">
    <citation type="journal article" date="2007" name="Proc. Natl. Acad. Sci. U.S.A.">
        <title>Genome and proteome of long-chain alkane degrading Geobacillus thermodenitrificans NG80-2 isolated from a deep-subsurface oil reservoir.</title>
        <authorList>
            <person name="Feng L."/>
            <person name="Wang W."/>
            <person name="Cheng J."/>
            <person name="Ren Y."/>
            <person name="Zhao G."/>
            <person name="Gao C."/>
            <person name="Tang Y."/>
            <person name="Liu X."/>
            <person name="Han W."/>
            <person name="Peng X."/>
            <person name="Liu R."/>
            <person name="Wang L."/>
        </authorList>
    </citation>
    <scope>NUCLEOTIDE SEQUENCE [LARGE SCALE GENOMIC DNA]</scope>
    <source>
        <strain>NG80-2</strain>
    </source>
</reference>
<protein>
    <recommendedName>
        <fullName evidence="1">Acetyl-coenzyme A carboxylase carboxyl transferase subunit alpha</fullName>
        <shortName evidence="1">ACCase subunit alpha</shortName>
        <shortName evidence="1">Acetyl-CoA carboxylase carboxyltransferase subunit alpha</shortName>
        <ecNumber evidence="1">2.1.3.15</ecNumber>
    </recommendedName>
</protein>
<proteinExistence type="inferred from homology"/>
<sequence length="325" mass="36331">MVAELEFEKPLVELRRKIQELKEFMKTADVDLSSEIEKLEARLTKLENEVYANLTPWDRVQIARHPQRPTTLDYIERLFTNFFECHGDRCFGDDEAIVGGIADYDGLPVTVIGHQRGKDTKENLRRNFGMPHPEGYRKALRLMKQAEKFSRPIICFIDTKGAYPGKAAEERGQSEAIARNLFEMAGLTVPVVCIVIGEGGSGGALALGVGNHIHMLENSTYSVISPEGAAAILWKDASLAQRAAETMKITAHDLKTLGVIDEIIPEVKGGAHRNADEQAKEIDRVLRASLKQLLALDGEALVEQRYEKFKQMGQVSFLQETIRAR</sequence>
<feature type="chain" id="PRO_1000062626" description="Acetyl-coenzyme A carboxylase carboxyl transferase subunit alpha">
    <location>
        <begin position="1"/>
        <end position="325"/>
    </location>
</feature>
<feature type="domain" description="CoA carboxyltransferase C-terminal" evidence="2">
    <location>
        <begin position="35"/>
        <end position="292"/>
    </location>
</feature>